<feature type="chain" id="PRO_0000223774" description="Acetyl-coenzyme A carboxylase carboxyl transferase subunit alpha">
    <location>
        <begin position="1"/>
        <end position="317"/>
    </location>
</feature>
<feature type="domain" description="CoA carboxyltransferase C-terminal" evidence="2">
    <location>
        <begin position="40"/>
        <end position="294"/>
    </location>
</feature>
<sequence length="317" mass="35212">MSQEYLDFELPIAELEAKIESLRSVCAQDGKIDLEDEINRLQHKSQELTKKTFANLDAWQVSRMARHPNRPYTLDYIEHIFTEFDELAGDRAFADDKAIVGGIARLDGRPVMVIGHQKGRVTKEKVKRNFGMPAPEGYRKALRLMEMAERFKMPIITFIDTPGAYPGIGAEERGQAEAIARNLREMSQLSVPIICTVIGEGGSGGALAIGVGDKVNMLQYSTYSVISPEGCASILWKSAEKASMAAEVMGLTAQRLKELNLIDGIVDEPLGGAHRDVLKIAHNLKQQILADLAELDSLTTEALLERRYERLMSYGYV</sequence>
<keyword id="KW-0067">ATP-binding</keyword>
<keyword id="KW-0963">Cytoplasm</keyword>
<keyword id="KW-0275">Fatty acid biosynthesis</keyword>
<keyword id="KW-0276">Fatty acid metabolism</keyword>
<keyword id="KW-0444">Lipid biosynthesis</keyword>
<keyword id="KW-0443">Lipid metabolism</keyword>
<keyword id="KW-0547">Nucleotide-binding</keyword>
<keyword id="KW-1185">Reference proteome</keyword>
<keyword id="KW-0808">Transferase</keyword>
<accession>Q7VPL3</accession>
<proteinExistence type="inferred from homology"/>
<evidence type="ECO:0000255" key="1">
    <source>
        <dbReference type="HAMAP-Rule" id="MF_00823"/>
    </source>
</evidence>
<evidence type="ECO:0000255" key="2">
    <source>
        <dbReference type="PROSITE-ProRule" id="PRU01137"/>
    </source>
</evidence>
<reference key="1">
    <citation type="submission" date="2003-06" db="EMBL/GenBank/DDBJ databases">
        <title>The complete genome sequence of Haemophilus ducreyi.</title>
        <authorList>
            <person name="Munson R.S. Jr."/>
            <person name="Ray W.C."/>
            <person name="Mahairas G."/>
            <person name="Sabo P."/>
            <person name="Mungur R."/>
            <person name="Johnson L."/>
            <person name="Nguyen D."/>
            <person name="Wang J."/>
            <person name="Forst C."/>
            <person name="Hood L."/>
        </authorList>
    </citation>
    <scope>NUCLEOTIDE SEQUENCE [LARGE SCALE GENOMIC DNA]</scope>
    <source>
        <strain>35000HP / ATCC 700724</strain>
    </source>
</reference>
<name>ACCA_HAEDU</name>
<protein>
    <recommendedName>
        <fullName evidence="1">Acetyl-coenzyme A carboxylase carboxyl transferase subunit alpha</fullName>
        <shortName evidence="1">ACCase subunit alpha</shortName>
        <shortName evidence="1">Acetyl-CoA carboxylase carboxyltransferase subunit alpha</shortName>
        <ecNumber evidence="1">2.1.3.15</ecNumber>
    </recommendedName>
</protein>
<dbReference type="EC" id="2.1.3.15" evidence="1"/>
<dbReference type="EMBL" id="AE017143">
    <property type="protein sequence ID" value="AAP95066.1"/>
    <property type="molecule type" value="Genomic_DNA"/>
</dbReference>
<dbReference type="RefSeq" id="WP_010944120.1">
    <property type="nucleotide sequence ID" value="NC_002940.2"/>
</dbReference>
<dbReference type="SMR" id="Q7VPL3"/>
<dbReference type="STRING" id="233412.HD_0051"/>
<dbReference type="KEGG" id="hdu:HD_0051"/>
<dbReference type="eggNOG" id="COG0825">
    <property type="taxonomic scope" value="Bacteria"/>
</dbReference>
<dbReference type="HOGENOM" id="CLU_015486_0_2_6"/>
<dbReference type="OrthoDB" id="9808023at2"/>
<dbReference type="UniPathway" id="UPA00655">
    <property type="reaction ID" value="UER00711"/>
</dbReference>
<dbReference type="Proteomes" id="UP000001022">
    <property type="component" value="Chromosome"/>
</dbReference>
<dbReference type="GO" id="GO:0009317">
    <property type="term" value="C:acetyl-CoA carboxylase complex"/>
    <property type="evidence" value="ECO:0007669"/>
    <property type="project" value="InterPro"/>
</dbReference>
<dbReference type="GO" id="GO:0003989">
    <property type="term" value="F:acetyl-CoA carboxylase activity"/>
    <property type="evidence" value="ECO:0007669"/>
    <property type="project" value="InterPro"/>
</dbReference>
<dbReference type="GO" id="GO:0005524">
    <property type="term" value="F:ATP binding"/>
    <property type="evidence" value="ECO:0007669"/>
    <property type="project" value="UniProtKB-KW"/>
</dbReference>
<dbReference type="GO" id="GO:0016743">
    <property type="term" value="F:carboxyl- or carbamoyltransferase activity"/>
    <property type="evidence" value="ECO:0007669"/>
    <property type="project" value="UniProtKB-UniRule"/>
</dbReference>
<dbReference type="GO" id="GO:0006633">
    <property type="term" value="P:fatty acid biosynthetic process"/>
    <property type="evidence" value="ECO:0007669"/>
    <property type="project" value="UniProtKB-KW"/>
</dbReference>
<dbReference type="GO" id="GO:2001295">
    <property type="term" value="P:malonyl-CoA biosynthetic process"/>
    <property type="evidence" value="ECO:0007669"/>
    <property type="project" value="UniProtKB-UniRule"/>
</dbReference>
<dbReference type="FunFam" id="3.90.226.10:FF:000008">
    <property type="entry name" value="Acetyl-coenzyme A carboxylase carboxyl transferase subunit alpha"/>
    <property type="match status" value="1"/>
</dbReference>
<dbReference type="Gene3D" id="3.90.226.10">
    <property type="entry name" value="2-enoyl-CoA Hydratase, Chain A, domain 1"/>
    <property type="match status" value="1"/>
</dbReference>
<dbReference type="HAMAP" id="MF_00823">
    <property type="entry name" value="AcetylCoA_CT_alpha"/>
    <property type="match status" value="1"/>
</dbReference>
<dbReference type="InterPro" id="IPR001095">
    <property type="entry name" value="Acetyl_CoA_COase_a_su"/>
</dbReference>
<dbReference type="InterPro" id="IPR029045">
    <property type="entry name" value="ClpP/crotonase-like_dom_sf"/>
</dbReference>
<dbReference type="InterPro" id="IPR011763">
    <property type="entry name" value="COA_CT_C"/>
</dbReference>
<dbReference type="NCBIfam" id="TIGR00513">
    <property type="entry name" value="accA"/>
    <property type="match status" value="1"/>
</dbReference>
<dbReference type="NCBIfam" id="NF041504">
    <property type="entry name" value="AccA_sub"/>
    <property type="match status" value="1"/>
</dbReference>
<dbReference type="NCBIfam" id="NF004344">
    <property type="entry name" value="PRK05724.1"/>
    <property type="match status" value="1"/>
</dbReference>
<dbReference type="PANTHER" id="PTHR42853">
    <property type="entry name" value="ACETYL-COENZYME A CARBOXYLASE CARBOXYL TRANSFERASE SUBUNIT ALPHA"/>
    <property type="match status" value="1"/>
</dbReference>
<dbReference type="PANTHER" id="PTHR42853:SF3">
    <property type="entry name" value="ACETYL-COENZYME A CARBOXYLASE CARBOXYL TRANSFERASE SUBUNIT ALPHA, CHLOROPLASTIC"/>
    <property type="match status" value="1"/>
</dbReference>
<dbReference type="Pfam" id="PF03255">
    <property type="entry name" value="ACCA"/>
    <property type="match status" value="1"/>
</dbReference>
<dbReference type="PRINTS" id="PR01069">
    <property type="entry name" value="ACCCTRFRASEA"/>
</dbReference>
<dbReference type="SUPFAM" id="SSF52096">
    <property type="entry name" value="ClpP/crotonase"/>
    <property type="match status" value="1"/>
</dbReference>
<dbReference type="PROSITE" id="PS50989">
    <property type="entry name" value="COA_CT_CTER"/>
    <property type="match status" value="1"/>
</dbReference>
<comment type="function">
    <text evidence="1">Component of the acetyl coenzyme A carboxylase (ACC) complex. First, biotin carboxylase catalyzes the carboxylation of biotin on its carrier protein (BCCP) and then the CO(2) group is transferred by the carboxyltransferase to acetyl-CoA to form malonyl-CoA.</text>
</comment>
<comment type="catalytic activity">
    <reaction evidence="1">
        <text>N(6)-carboxybiotinyl-L-lysyl-[protein] + acetyl-CoA = N(6)-biotinyl-L-lysyl-[protein] + malonyl-CoA</text>
        <dbReference type="Rhea" id="RHEA:54728"/>
        <dbReference type="Rhea" id="RHEA-COMP:10505"/>
        <dbReference type="Rhea" id="RHEA-COMP:10506"/>
        <dbReference type="ChEBI" id="CHEBI:57288"/>
        <dbReference type="ChEBI" id="CHEBI:57384"/>
        <dbReference type="ChEBI" id="CHEBI:83144"/>
        <dbReference type="ChEBI" id="CHEBI:83145"/>
        <dbReference type="EC" id="2.1.3.15"/>
    </reaction>
</comment>
<comment type="pathway">
    <text evidence="1">Lipid metabolism; malonyl-CoA biosynthesis; malonyl-CoA from acetyl-CoA: step 1/1.</text>
</comment>
<comment type="subunit">
    <text evidence="1">Acetyl-CoA carboxylase is a heterohexamer composed of biotin carboxyl carrier protein (AccB), biotin carboxylase (AccC) and two subunits each of ACCase subunit alpha (AccA) and ACCase subunit beta (AccD).</text>
</comment>
<comment type="subcellular location">
    <subcellularLocation>
        <location evidence="1">Cytoplasm</location>
    </subcellularLocation>
</comment>
<comment type="similarity">
    <text evidence="1">Belongs to the AccA family.</text>
</comment>
<organism>
    <name type="scientific">Haemophilus ducreyi (strain 35000HP / ATCC 700724)</name>
    <dbReference type="NCBI Taxonomy" id="233412"/>
    <lineage>
        <taxon>Bacteria</taxon>
        <taxon>Pseudomonadati</taxon>
        <taxon>Pseudomonadota</taxon>
        <taxon>Gammaproteobacteria</taxon>
        <taxon>Pasteurellales</taxon>
        <taxon>Pasteurellaceae</taxon>
        <taxon>Haemophilus</taxon>
    </lineage>
</organism>
<gene>
    <name evidence="1" type="primary">accA</name>
    <name type="ordered locus">HD_0051</name>
</gene>